<gene>
    <name evidence="1" type="primary">ureE</name>
    <name type="ordered locus">BPP3854</name>
</gene>
<reference key="1">
    <citation type="journal article" date="2003" name="Nat. Genet.">
        <title>Comparative analysis of the genome sequences of Bordetella pertussis, Bordetella parapertussis and Bordetella bronchiseptica.</title>
        <authorList>
            <person name="Parkhill J."/>
            <person name="Sebaihia M."/>
            <person name="Preston A."/>
            <person name="Murphy L.D."/>
            <person name="Thomson N.R."/>
            <person name="Harris D.E."/>
            <person name="Holden M.T.G."/>
            <person name="Churcher C.M."/>
            <person name="Bentley S.D."/>
            <person name="Mungall K.L."/>
            <person name="Cerdeno-Tarraga A.-M."/>
            <person name="Temple L."/>
            <person name="James K.D."/>
            <person name="Harris B."/>
            <person name="Quail M.A."/>
            <person name="Achtman M."/>
            <person name="Atkin R."/>
            <person name="Baker S."/>
            <person name="Basham D."/>
            <person name="Bason N."/>
            <person name="Cherevach I."/>
            <person name="Chillingworth T."/>
            <person name="Collins M."/>
            <person name="Cronin A."/>
            <person name="Davis P."/>
            <person name="Doggett J."/>
            <person name="Feltwell T."/>
            <person name="Goble A."/>
            <person name="Hamlin N."/>
            <person name="Hauser H."/>
            <person name="Holroyd S."/>
            <person name="Jagels K."/>
            <person name="Leather S."/>
            <person name="Moule S."/>
            <person name="Norberczak H."/>
            <person name="O'Neil S."/>
            <person name="Ormond D."/>
            <person name="Price C."/>
            <person name="Rabbinowitsch E."/>
            <person name="Rutter S."/>
            <person name="Sanders M."/>
            <person name="Saunders D."/>
            <person name="Seeger K."/>
            <person name="Sharp S."/>
            <person name="Simmonds M."/>
            <person name="Skelton J."/>
            <person name="Squares R."/>
            <person name="Squares S."/>
            <person name="Stevens K."/>
            <person name="Unwin L."/>
            <person name="Whitehead S."/>
            <person name="Barrell B.G."/>
            <person name="Maskell D.J."/>
        </authorList>
    </citation>
    <scope>NUCLEOTIDE SEQUENCE [LARGE SCALE GENOMIC DNA]</scope>
    <source>
        <strain>12822 / ATCC BAA-587 / NCTC 13253</strain>
    </source>
</reference>
<feature type="chain" id="PRO_0000223402" description="Urease accessory protein UreE">
    <location>
        <begin position="1"/>
        <end position="205"/>
    </location>
</feature>
<feature type="region of interest" description="Disordered" evidence="2">
    <location>
        <begin position="171"/>
        <end position="205"/>
    </location>
</feature>
<feature type="compositionally biased region" description="Basic residues" evidence="2">
    <location>
        <begin position="177"/>
        <end position="196"/>
    </location>
</feature>
<accession>Q7W418</accession>
<evidence type="ECO:0000255" key="1">
    <source>
        <dbReference type="HAMAP-Rule" id="MF_00822"/>
    </source>
</evidence>
<evidence type="ECO:0000256" key="2">
    <source>
        <dbReference type="SAM" id="MobiDB-lite"/>
    </source>
</evidence>
<protein>
    <recommendedName>
        <fullName evidence="1">Urease accessory protein UreE</fullName>
    </recommendedName>
</protein>
<proteinExistence type="inferred from homology"/>
<keyword id="KW-0143">Chaperone</keyword>
<keyword id="KW-0963">Cytoplasm</keyword>
<keyword id="KW-0533">Nickel</keyword>
<keyword id="KW-0996">Nickel insertion</keyword>
<dbReference type="EMBL" id="BX640435">
    <property type="protein sequence ID" value="CAE39137.1"/>
    <property type="molecule type" value="Genomic_DNA"/>
</dbReference>
<dbReference type="RefSeq" id="WP_010929279.1">
    <property type="nucleotide sequence ID" value="NC_002928.3"/>
</dbReference>
<dbReference type="SMR" id="Q7W418"/>
<dbReference type="GeneID" id="93205652"/>
<dbReference type="KEGG" id="bpa:BPP3854"/>
<dbReference type="HOGENOM" id="CLU_093757_0_0_4"/>
<dbReference type="Proteomes" id="UP000001421">
    <property type="component" value="Chromosome"/>
</dbReference>
<dbReference type="GO" id="GO:0005737">
    <property type="term" value="C:cytoplasm"/>
    <property type="evidence" value="ECO:0007669"/>
    <property type="project" value="UniProtKB-SubCell"/>
</dbReference>
<dbReference type="GO" id="GO:0016151">
    <property type="term" value="F:nickel cation binding"/>
    <property type="evidence" value="ECO:0007669"/>
    <property type="project" value="UniProtKB-UniRule"/>
</dbReference>
<dbReference type="GO" id="GO:0051082">
    <property type="term" value="F:unfolded protein binding"/>
    <property type="evidence" value="ECO:0007669"/>
    <property type="project" value="UniProtKB-UniRule"/>
</dbReference>
<dbReference type="GO" id="GO:0006457">
    <property type="term" value="P:protein folding"/>
    <property type="evidence" value="ECO:0007669"/>
    <property type="project" value="InterPro"/>
</dbReference>
<dbReference type="GO" id="GO:0065003">
    <property type="term" value="P:protein-containing complex assembly"/>
    <property type="evidence" value="ECO:0007669"/>
    <property type="project" value="InterPro"/>
</dbReference>
<dbReference type="GO" id="GO:0019627">
    <property type="term" value="P:urea metabolic process"/>
    <property type="evidence" value="ECO:0007669"/>
    <property type="project" value="InterPro"/>
</dbReference>
<dbReference type="CDD" id="cd00571">
    <property type="entry name" value="UreE"/>
    <property type="match status" value="1"/>
</dbReference>
<dbReference type="Gene3D" id="2.60.260.20">
    <property type="entry name" value="Urease metallochaperone UreE, N-terminal domain"/>
    <property type="match status" value="1"/>
</dbReference>
<dbReference type="Gene3D" id="3.30.70.790">
    <property type="entry name" value="UreE, C-terminal domain"/>
    <property type="match status" value="1"/>
</dbReference>
<dbReference type="HAMAP" id="MF_00822">
    <property type="entry name" value="UreE"/>
    <property type="match status" value="1"/>
</dbReference>
<dbReference type="InterPro" id="IPR012406">
    <property type="entry name" value="UreE"/>
</dbReference>
<dbReference type="InterPro" id="IPR007864">
    <property type="entry name" value="UreE_C_dom"/>
</dbReference>
<dbReference type="InterPro" id="IPR004029">
    <property type="entry name" value="UreE_N"/>
</dbReference>
<dbReference type="InterPro" id="IPR036118">
    <property type="entry name" value="UreE_N_sf"/>
</dbReference>
<dbReference type="NCBIfam" id="NF009762">
    <property type="entry name" value="PRK13263.1"/>
    <property type="match status" value="1"/>
</dbReference>
<dbReference type="Pfam" id="PF05194">
    <property type="entry name" value="UreE_C"/>
    <property type="match status" value="1"/>
</dbReference>
<dbReference type="Pfam" id="PF02814">
    <property type="entry name" value="UreE_N"/>
    <property type="match status" value="1"/>
</dbReference>
<dbReference type="SMART" id="SM00988">
    <property type="entry name" value="UreE_N"/>
    <property type="match status" value="1"/>
</dbReference>
<dbReference type="SUPFAM" id="SSF69737">
    <property type="entry name" value="Urease metallochaperone UreE, C-terminal domain"/>
    <property type="match status" value="1"/>
</dbReference>
<dbReference type="SUPFAM" id="SSF69287">
    <property type="entry name" value="Urease metallochaperone UreE, N-terminal domain"/>
    <property type="match status" value="1"/>
</dbReference>
<name>UREE_BORPA</name>
<organism>
    <name type="scientific">Bordetella parapertussis (strain 12822 / ATCC BAA-587 / NCTC 13253)</name>
    <dbReference type="NCBI Taxonomy" id="257311"/>
    <lineage>
        <taxon>Bacteria</taxon>
        <taxon>Pseudomonadati</taxon>
        <taxon>Pseudomonadota</taxon>
        <taxon>Betaproteobacteria</taxon>
        <taxon>Burkholderiales</taxon>
        <taxon>Alcaligenaceae</taxon>
        <taxon>Bordetella</taxon>
    </lineage>
</organism>
<sequence length="205" mass="22067">MKIANTFIKRGAAGGLDLSQAPGVTLTLAERRRSRQRLDLDEGRGELGMAIERGQTLRDGDVLVAEDGTYVVVRAALEDVARVTAATPWQLARAAYHLGNRHVLLEIAEQHLQFEYDAVLIDMLAQLGGVTAMRLRAVFEPDVGAYGGGHRHGHDESFGDDYALAQAAYHAHEAHPHAHSHAGGHGHVHSGHGHGGKHGEHDAES</sequence>
<comment type="function">
    <text evidence="1">Involved in urease metallocenter assembly. Binds nickel. Probably functions as a nickel donor during metallocenter assembly.</text>
</comment>
<comment type="subcellular location">
    <subcellularLocation>
        <location evidence="1">Cytoplasm</location>
    </subcellularLocation>
</comment>
<comment type="similarity">
    <text evidence="1">Belongs to the UreE family.</text>
</comment>